<reference key="1">
    <citation type="journal article" date="1992" name="Mol. Biochem. Parasitol.">
        <title>Isolation, sequence and molecular karyotype analysis of the actin gene of Cryptosporidium parvum.</title>
        <authorList>
            <person name="Kim K."/>
            <person name="Gooze L."/>
            <person name="Petersen C."/>
            <person name="Gut J."/>
            <person name="Nelson R.G."/>
        </authorList>
    </citation>
    <scope>NUCLEOTIDE SEQUENCE [GENOMIC DNA]</scope>
</reference>
<sequence>MSEEETQALVVDNGSGMVKAGVAGDDAPRCVFPSIVGRPKMPGVMVGMDQKDCYVGDEAQSKRGILTLKYPIEHGIVTNWEDMEKIWHHTFYNELRVAPEEHPVLLTEAPMNPKVNRERMTQIMFETFNVPAMYVNIQAVLSLYASGRTTGIVLDSGDGVSHTVPIYEGYAIPHAIMRLDLAGRDLTDFLMKILHDRGYSFTTTAEREIVRDIKEKLCYIALDYEEEMKKSQESSELEKTYELPDGHVITVGSERFRCPEALFQPGFLGKEAVGIGETTFQSIMKCDLDIRKDLYANIVLSGGTTMYPGIGERMTKELTSLAPSTMKIKVVAPPERKYSVWIGGSILSSLSTFQQMWITKEEYDESGPSIVHRKCF</sequence>
<accession>P26183</accession>
<evidence type="ECO:0000250" key="1">
    <source>
        <dbReference type="UniProtKB" id="P68137"/>
    </source>
</evidence>
<evidence type="ECO:0000305" key="2"/>
<proteinExistence type="inferred from homology"/>
<keyword id="KW-0067">ATP-binding</keyword>
<keyword id="KW-0963">Cytoplasm</keyword>
<keyword id="KW-0206">Cytoskeleton</keyword>
<keyword id="KW-0378">Hydrolase</keyword>
<keyword id="KW-0547">Nucleotide-binding</keyword>
<organism>
    <name type="scientific">Cryptosporidium parvum</name>
    <dbReference type="NCBI Taxonomy" id="5807"/>
    <lineage>
        <taxon>Eukaryota</taxon>
        <taxon>Sar</taxon>
        <taxon>Alveolata</taxon>
        <taxon>Apicomplexa</taxon>
        <taxon>Conoidasida</taxon>
        <taxon>Coccidia</taxon>
        <taxon>Eucoccidiorida</taxon>
        <taxon>Eimeriorina</taxon>
        <taxon>Cryptosporidiidae</taxon>
        <taxon>Cryptosporidium</taxon>
    </lineage>
</organism>
<comment type="function">
    <text>Actins are highly conserved proteins that are involved in various types of cell motility and are ubiquitously expressed in all eukaryotic cells.</text>
</comment>
<comment type="catalytic activity">
    <reaction evidence="1">
        <text>ATP + H2O = ADP + phosphate + H(+)</text>
        <dbReference type="Rhea" id="RHEA:13065"/>
        <dbReference type="ChEBI" id="CHEBI:15377"/>
        <dbReference type="ChEBI" id="CHEBI:15378"/>
        <dbReference type="ChEBI" id="CHEBI:30616"/>
        <dbReference type="ChEBI" id="CHEBI:43474"/>
        <dbReference type="ChEBI" id="CHEBI:456216"/>
    </reaction>
</comment>
<comment type="subcellular location">
    <subcellularLocation>
        <location>Cytoplasm</location>
        <location>Cytoskeleton</location>
    </subcellularLocation>
</comment>
<comment type="similarity">
    <text evidence="2">Belongs to the actin family.</text>
</comment>
<name>ACT_CRYPV</name>
<feature type="chain" id="PRO_0000088918" description="Actin">
    <location>
        <begin position="1"/>
        <end position="376"/>
    </location>
</feature>
<protein>
    <recommendedName>
        <fullName>Actin</fullName>
        <ecNumber evidence="1">3.6.4.-</ecNumber>
    </recommendedName>
</protein>
<dbReference type="EC" id="3.6.4.-" evidence="1"/>
<dbReference type="EMBL" id="M86241">
    <property type="protein sequence ID" value="AAA28295.1"/>
    <property type="molecule type" value="Genomic_DNA"/>
</dbReference>
<dbReference type="PIR" id="A45634">
    <property type="entry name" value="A45634"/>
</dbReference>
<dbReference type="SMR" id="P26183"/>
<dbReference type="VEuPathDB" id="CryptoDB:cgd5_3160"/>
<dbReference type="VEuPathDB" id="CryptoDB:CPATCC_0025920"/>
<dbReference type="OMA" id="FHTTAER"/>
<dbReference type="GO" id="GO:0005737">
    <property type="term" value="C:cytoplasm"/>
    <property type="evidence" value="ECO:0007669"/>
    <property type="project" value="UniProtKB-KW"/>
</dbReference>
<dbReference type="GO" id="GO:0005856">
    <property type="term" value="C:cytoskeleton"/>
    <property type="evidence" value="ECO:0007669"/>
    <property type="project" value="UniProtKB-SubCell"/>
</dbReference>
<dbReference type="GO" id="GO:0005524">
    <property type="term" value="F:ATP binding"/>
    <property type="evidence" value="ECO:0007669"/>
    <property type="project" value="UniProtKB-KW"/>
</dbReference>
<dbReference type="GO" id="GO:0016787">
    <property type="term" value="F:hydrolase activity"/>
    <property type="evidence" value="ECO:0007669"/>
    <property type="project" value="UniProtKB-KW"/>
</dbReference>
<dbReference type="CDD" id="cd10224">
    <property type="entry name" value="ASKHA_NBD_actin"/>
    <property type="match status" value="1"/>
</dbReference>
<dbReference type="FunFam" id="2.30.36.70:FF:000001">
    <property type="entry name" value="Actin, alpha skeletal muscle"/>
    <property type="match status" value="1"/>
</dbReference>
<dbReference type="FunFam" id="3.30.420.40:FF:000291">
    <property type="entry name" value="Actin, alpha skeletal muscle"/>
    <property type="match status" value="1"/>
</dbReference>
<dbReference type="FunFam" id="3.90.640.10:FF:000001">
    <property type="entry name" value="Actin, muscle"/>
    <property type="match status" value="1"/>
</dbReference>
<dbReference type="FunFam" id="3.30.420.40:FF:000404">
    <property type="entry name" value="Major actin"/>
    <property type="match status" value="1"/>
</dbReference>
<dbReference type="FunFam" id="3.30.420.40:FF:000058">
    <property type="entry name" value="Putative actin-related protein 5"/>
    <property type="match status" value="1"/>
</dbReference>
<dbReference type="Gene3D" id="3.30.420.40">
    <property type="match status" value="2"/>
</dbReference>
<dbReference type="Gene3D" id="3.90.640.10">
    <property type="entry name" value="Actin, Chain A, domain 4"/>
    <property type="match status" value="1"/>
</dbReference>
<dbReference type="InterPro" id="IPR004000">
    <property type="entry name" value="Actin"/>
</dbReference>
<dbReference type="InterPro" id="IPR020902">
    <property type="entry name" value="Actin/actin-like_CS"/>
</dbReference>
<dbReference type="InterPro" id="IPR004001">
    <property type="entry name" value="Actin_CS"/>
</dbReference>
<dbReference type="InterPro" id="IPR043129">
    <property type="entry name" value="ATPase_NBD"/>
</dbReference>
<dbReference type="PANTHER" id="PTHR11937">
    <property type="entry name" value="ACTIN"/>
    <property type="match status" value="1"/>
</dbReference>
<dbReference type="Pfam" id="PF00022">
    <property type="entry name" value="Actin"/>
    <property type="match status" value="1"/>
</dbReference>
<dbReference type="PRINTS" id="PR00190">
    <property type="entry name" value="ACTIN"/>
</dbReference>
<dbReference type="SMART" id="SM00268">
    <property type="entry name" value="ACTIN"/>
    <property type="match status" value="1"/>
</dbReference>
<dbReference type="SUPFAM" id="SSF53067">
    <property type="entry name" value="Actin-like ATPase domain"/>
    <property type="match status" value="2"/>
</dbReference>
<dbReference type="PROSITE" id="PS00406">
    <property type="entry name" value="ACTINS_1"/>
    <property type="match status" value="1"/>
</dbReference>
<dbReference type="PROSITE" id="PS00432">
    <property type="entry name" value="ACTINS_2"/>
    <property type="match status" value="1"/>
</dbReference>
<dbReference type="PROSITE" id="PS01132">
    <property type="entry name" value="ACTINS_ACT_LIKE"/>
    <property type="match status" value="1"/>
</dbReference>